<keyword id="KW-0025">Alternative splicing</keyword>
<keyword id="KW-0238">DNA-binding</keyword>
<keyword id="KW-0479">Metal-binding</keyword>
<keyword id="KW-0539">Nucleus</keyword>
<keyword id="KW-1267">Proteomics identification</keyword>
<keyword id="KW-1185">Reference proteome</keyword>
<keyword id="KW-0677">Repeat</keyword>
<keyword id="KW-0804">Transcription</keyword>
<keyword id="KW-0805">Transcription regulation</keyword>
<keyword id="KW-0862">Zinc</keyword>
<keyword id="KW-0863">Zinc-finger</keyword>
<dbReference type="EMBL" id="AK056006">
    <property type="protein sequence ID" value="BAB71072.1"/>
    <property type="molecule type" value="mRNA"/>
</dbReference>
<dbReference type="EMBL" id="AL834415">
    <property type="protein sequence ID" value="CAD39077.1"/>
    <property type="status" value="ALT_INIT"/>
    <property type="molecule type" value="mRNA"/>
</dbReference>
<dbReference type="EMBL" id="AC010620">
    <property type="status" value="NOT_ANNOTATED_CDS"/>
    <property type="molecule type" value="Genomic_DNA"/>
</dbReference>
<dbReference type="EMBL" id="AC012627">
    <property type="status" value="NOT_ANNOTATED_CDS"/>
    <property type="molecule type" value="Genomic_DNA"/>
</dbReference>
<dbReference type="EMBL" id="BC037782">
    <property type="protein sequence ID" value="AAH37782.1"/>
    <property type="molecule type" value="mRNA"/>
</dbReference>
<dbReference type="EMBL" id="BC050468">
    <property type="protein sequence ID" value="AAH50468.2"/>
    <property type="status" value="ALT_INIT"/>
    <property type="molecule type" value="mRNA"/>
</dbReference>
<dbReference type="RefSeq" id="NP_872321.2">
    <property type="nucleotide sequence ID" value="NM_182515.3"/>
</dbReference>
<dbReference type="SMR" id="Q96N38"/>
<dbReference type="BioGRID" id="127129">
    <property type="interactions" value="18"/>
</dbReference>
<dbReference type="FunCoup" id="Q96N38">
    <property type="interactions" value="37"/>
</dbReference>
<dbReference type="IntAct" id="Q96N38">
    <property type="interactions" value="10"/>
</dbReference>
<dbReference type="STRING" id="9606.ENSP00000478345"/>
<dbReference type="iPTMnet" id="Q96N38"/>
<dbReference type="PhosphoSitePlus" id="Q96N38"/>
<dbReference type="BioMuta" id="ZNF714"/>
<dbReference type="DMDM" id="527504073"/>
<dbReference type="jPOST" id="Q96N38"/>
<dbReference type="MassIVE" id="Q96N38"/>
<dbReference type="PaxDb" id="9606-ENSP00000478345"/>
<dbReference type="PeptideAtlas" id="Q96N38"/>
<dbReference type="ProteomicsDB" id="77461">
    <molecule id="Q96N38-1"/>
</dbReference>
<dbReference type="ProteomicsDB" id="77462">
    <molecule id="Q96N38-2"/>
</dbReference>
<dbReference type="ProteomicsDB" id="77463">
    <molecule id="Q96N38-3"/>
</dbReference>
<dbReference type="Pumba" id="Q96N38"/>
<dbReference type="DNASU" id="148206"/>
<dbReference type="GeneID" id="148206"/>
<dbReference type="KEGG" id="hsa:148206"/>
<dbReference type="AGR" id="HGNC:27124"/>
<dbReference type="CTD" id="148206"/>
<dbReference type="DisGeNET" id="148206"/>
<dbReference type="GeneCards" id="ZNF714"/>
<dbReference type="HGNC" id="HGNC:27124">
    <property type="gene designation" value="ZNF714"/>
</dbReference>
<dbReference type="neXtProt" id="NX_Q96N38"/>
<dbReference type="PharmGKB" id="PA143485680"/>
<dbReference type="eggNOG" id="KOG1721">
    <property type="taxonomic scope" value="Eukaryota"/>
</dbReference>
<dbReference type="InParanoid" id="Q96N38"/>
<dbReference type="OrthoDB" id="1095242at2759"/>
<dbReference type="PAN-GO" id="Q96N38">
    <property type="GO annotations" value="3 GO annotations based on evolutionary models"/>
</dbReference>
<dbReference type="PhylomeDB" id="Q96N38"/>
<dbReference type="TreeFam" id="TF342117"/>
<dbReference type="PathwayCommons" id="Q96N38"/>
<dbReference type="Reactome" id="R-HSA-212436">
    <property type="pathway name" value="Generic Transcription Pathway"/>
</dbReference>
<dbReference type="SignaLink" id="Q96N38"/>
<dbReference type="BioGRID-ORCS" id="148206">
    <property type="hits" value="19 hits in 1079 CRISPR screens"/>
</dbReference>
<dbReference type="ChiTaRS" id="ZNF714">
    <property type="organism name" value="human"/>
</dbReference>
<dbReference type="GenomeRNAi" id="148206"/>
<dbReference type="Pharos" id="Q96N38">
    <property type="development level" value="Tdark"/>
</dbReference>
<dbReference type="PRO" id="PR:Q96N38"/>
<dbReference type="Proteomes" id="UP000005640">
    <property type="component" value="Unplaced"/>
</dbReference>
<dbReference type="RNAct" id="Q96N38">
    <property type="molecule type" value="protein"/>
</dbReference>
<dbReference type="GO" id="GO:0005634">
    <property type="term" value="C:nucleus"/>
    <property type="evidence" value="ECO:0007669"/>
    <property type="project" value="UniProtKB-SubCell"/>
</dbReference>
<dbReference type="GO" id="GO:0000981">
    <property type="term" value="F:DNA-binding transcription factor activity, RNA polymerase II-specific"/>
    <property type="evidence" value="ECO:0000318"/>
    <property type="project" value="GO_Central"/>
</dbReference>
<dbReference type="GO" id="GO:0000978">
    <property type="term" value="F:RNA polymerase II cis-regulatory region sequence-specific DNA binding"/>
    <property type="evidence" value="ECO:0000318"/>
    <property type="project" value="GO_Central"/>
</dbReference>
<dbReference type="GO" id="GO:0008270">
    <property type="term" value="F:zinc ion binding"/>
    <property type="evidence" value="ECO:0007669"/>
    <property type="project" value="UniProtKB-KW"/>
</dbReference>
<dbReference type="GO" id="GO:0006355">
    <property type="term" value="P:regulation of DNA-templated transcription"/>
    <property type="evidence" value="ECO:0000318"/>
    <property type="project" value="GO_Central"/>
</dbReference>
<dbReference type="FunFam" id="3.30.160.60:FF:001737">
    <property type="entry name" value="Zinc finger protein 100"/>
    <property type="match status" value="2"/>
</dbReference>
<dbReference type="FunFam" id="3.30.160.60:FF:000120">
    <property type="entry name" value="Zinc finger protein 430"/>
    <property type="match status" value="8"/>
</dbReference>
<dbReference type="FunFam" id="3.30.160.60:FF:002448">
    <property type="entry name" value="Zinc finger protein 430"/>
    <property type="match status" value="1"/>
</dbReference>
<dbReference type="FunFam" id="3.30.160.60:FF:000362">
    <property type="entry name" value="Zinc finger protein 606"/>
    <property type="match status" value="1"/>
</dbReference>
<dbReference type="FunFam" id="3.30.160.60:FF:000307">
    <property type="entry name" value="Zinc finger protein ZFP69 isoform 1"/>
    <property type="match status" value="1"/>
</dbReference>
<dbReference type="Gene3D" id="3.30.160.60">
    <property type="entry name" value="Classic Zinc Finger"/>
    <property type="match status" value="14"/>
</dbReference>
<dbReference type="InterPro" id="IPR001909">
    <property type="entry name" value="KRAB"/>
</dbReference>
<dbReference type="InterPro" id="IPR036236">
    <property type="entry name" value="Znf_C2H2_sf"/>
</dbReference>
<dbReference type="InterPro" id="IPR013087">
    <property type="entry name" value="Znf_C2H2_type"/>
</dbReference>
<dbReference type="PANTHER" id="PTHR24379">
    <property type="entry name" value="KRAB AND ZINC FINGER DOMAIN-CONTAINING"/>
    <property type="match status" value="1"/>
</dbReference>
<dbReference type="PANTHER" id="PTHR24379:SF131">
    <property type="entry name" value="ZINC FINGER PROTEIN 737-LIKE-RELATED"/>
    <property type="match status" value="1"/>
</dbReference>
<dbReference type="Pfam" id="PF00096">
    <property type="entry name" value="zf-C2H2"/>
    <property type="match status" value="10"/>
</dbReference>
<dbReference type="Pfam" id="PF13465">
    <property type="entry name" value="zf-H2C2_2"/>
    <property type="match status" value="1"/>
</dbReference>
<dbReference type="SMART" id="SM00349">
    <property type="entry name" value="KRAB"/>
    <property type="match status" value="1"/>
</dbReference>
<dbReference type="SMART" id="SM00355">
    <property type="entry name" value="ZnF_C2H2"/>
    <property type="match status" value="13"/>
</dbReference>
<dbReference type="SUPFAM" id="SSF57667">
    <property type="entry name" value="beta-beta-alpha zinc fingers"/>
    <property type="match status" value="7"/>
</dbReference>
<dbReference type="PROSITE" id="PS50805">
    <property type="entry name" value="KRAB"/>
    <property type="match status" value="1"/>
</dbReference>
<dbReference type="PROSITE" id="PS00028">
    <property type="entry name" value="ZINC_FINGER_C2H2_1"/>
    <property type="match status" value="12"/>
</dbReference>
<dbReference type="PROSITE" id="PS50157">
    <property type="entry name" value="ZINC_FINGER_C2H2_2"/>
    <property type="match status" value="14"/>
</dbReference>
<accession>Q96N38</accession>
<accession>Q49AI1</accession>
<accession>Q86W65</accession>
<accession>Q8ND40</accession>
<protein>
    <recommendedName>
        <fullName>Zinc finger protein 714</fullName>
    </recommendedName>
</protein>
<reference key="1">
    <citation type="journal article" date="2004" name="Nat. Genet.">
        <title>Complete sequencing and characterization of 21,243 full-length human cDNAs.</title>
        <authorList>
            <person name="Ota T."/>
            <person name="Suzuki Y."/>
            <person name="Nishikawa T."/>
            <person name="Otsuki T."/>
            <person name="Sugiyama T."/>
            <person name="Irie R."/>
            <person name="Wakamatsu A."/>
            <person name="Hayashi K."/>
            <person name="Sato H."/>
            <person name="Nagai K."/>
            <person name="Kimura K."/>
            <person name="Makita H."/>
            <person name="Sekine M."/>
            <person name="Obayashi M."/>
            <person name="Nishi T."/>
            <person name="Shibahara T."/>
            <person name="Tanaka T."/>
            <person name="Ishii S."/>
            <person name="Yamamoto J."/>
            <person name="Saito K."/>
            <person name="Kawai Y."/>
            <person name="Isono Y."/>
            <person name="Nakamura Y."/>
            <person name="Nagahari K."/>
            <person name="Murakami K."/>
            <person name="Yasuda T."/>
            <person name="Iwayanagi T."/>
            <person name="Wagatsuma M."/>
            <person name="Shiratori A."/>
            <person name="Sudo H."/>
            <person name="Hosoiri T."/>
            <person name="Kaku Y."/>
            <person name="Kodaira H."/>
            <person name="Kondo H."/>
            <person name="Sugawara M."/>
            <person name="Takahashi M."/>
            <person name="Kanda K."/>
            <person name="Yokoi T."/>
            <person name="Furuya T."/>
            <person name="Kikkawa E."/>
            <person name="Omura Y."/>
            <person name="Abe K."/>
            <person name="Kamihara K."/>
            <person name="Katsuta N."/>
            <person name="Sato K."/>
            <person name="Tanikawa M."/>
            <person name="Yamazaki M."/>
            <person name="Ninomiya K."/>
            <person name="Ishibashi T."/>
            <person name="Yamashita H."/>
            <person name="Murakawa K."/>
            <person name="Fujimori K."/>
            <person name="Tanai H."/>
            <person name="Kimata M."/>
            <person name="Watanabe M."/>
            <person name="Hiraoka S."/>
            <person name="Chiba Y."/>
            <person name="Ishida S."/>
            <person name="Ono Y."/>
            <person name="Takiguchi S."/>
            <person name="Watanabe S."/>
            <person name="Yosida M."/>
            <person name="Hotuta T."/>
            <person name="Kusano J."/>
            <person name="Kanehori K."/>
            <person name="Takahashi-Fujii A."/>
            <person name="Hara H."/>
            <person name="Tanase T.-O."/>
            <person name="Nomura Y."/>
            <person name="Togiya S."/>
            <person name="Komai F."/>
            <person name="Hara R."/>
            <person name="Takeuchi K."/>
            <person name="Arita M."/>
            <person name="Imose N."/>
            <person name="Musashino K."/>
            <person name="Yuuki H."/>
            <person name="Oshima A."/>
            <person name="Sasaki N."/>
            <person name="Aotsuka S."/>
            <person name="Yoshikawa Y."/>
            <person name="Matsunawa H."/>
            <person name="Ichihara T."/>
            <person name="Shiohata N."/>
            <person name="Sano S."/>
            <person name="Moriya S."/>
            <person name="Momiyama H."/>
            <person name="Satoh N."/>
            <person name="Takami S."/>
            <person name="Terashima Y."/>
            <person name="Suzuki O."/>
            <person name="Nakagawa S."/>
            <person name="Senoh A."/>
            <person name="Mizoguchi H."/>
            <person name="Goto Y."/>
            <person name="Shimizu F."/>
            <person name="Wakebe H."/>
            <person name="Hishigaki H."/>
            <person name="Watanabe T."/>
            <person name="Sugiyama A."/>
            <person name="Takemoto M."/>
            <person name="Kawakami B."/>
            <person name="Yamazaki M."/>
            <person name="Watanabe K."/>
            <person name="Kumagai A."/>
            <person name="Itakura S."/>
            <person name="Fukuzumi Y."/>
            <person name="Fujimori Y."/>
            <person name="Komiyama M."/>
            <person name="Tashiro H."/>
            <person name="Tanigami A."/>
            <person name="Fujiwara T."/>
            <person name="Ono T."/>
            <person name="Yamada K."/>
            <person name="Fujii Y."/>
            <person name="Ozaki K."/>
            <person name="Hirao M."/>
            <person name="Ohmori Y."/>
            <person name="Kawabata A."/>
            <person name="Hikiji T."/>
            <person name="Kobatake N."/>
            <person name="Inagaki H."/>
            <person name="Ikema Y."/>
            <person name="Okamoto S."/>
            <person name="Okitani R."/>
            <person name="Kawakami T."/>
            <person name="Noguchi S."/>
            <person name="Itoh T."/>
            <person name="Shigeta K."/>
            <person name="Senba T."/>
            <person name="Matsumura K."/>
            <person name="Nakajima Y."/>
            <person name="Mizuno T."/>
            <person name="Morinaga M."/>
            <person name="Sasaki M."/>
            <person name="Togashi T."/>
            <person name="Oyama M."/>
            <person name="Hata H."/>
            <person name="Watanabe M."/>
            <person name="Komatsu T."/>
            <person name="Mizushima-Sugano J."/>
            <person name="Satoh T."/>
            <person name="Shirai Y."/>
            <person name="Takahashi Y."/>
            <person name="Nakagawa K."/>
            <person name="Okumura K."/>
            <person name="Nagase T."/>
            <person name="Nomura N."/>
            <person name="Kikuchi H."/>
            <person name="Masuho Y."/>
            <person name="Yamashita R."/>
            <person name="Nakai K."/>
            <person name="Yada T."/>
            <person name="Nakamura Y."/>
            <person name="Ohara O."/>
            <person name="Isogai T."/>
            <person name="Sugano S."/>
        </authorList>
    </citation>
    <scope>NUCLEOTIDE SEQUENCE [LARGE SCALE MRNA] (ISOFORM 1)</scope>
    <scope>VARIANT ARG-331</scope>
</reference>
<reference key="2">
    <citation type="journal article" date="2007" name="BMC Genomics">
        <title>The full-ORF clone resource of the German cDNA consortium.</title>
        <authorList>
            <person name="Bechtel S."/>
            <person name="Rosenfelder H."/>
            <person name="Duda A."/>
            <person name="Schmidt C.P."/>
            <person name="Ernst U."/>
            <person name="Wellenreuther R."/>
            <person name="Mehrle A."/>
            <person name="Schuster C."/>
            <person name="Bahr A."/>
            <person name="Bloecker H."/>
            <person name="Heubner D."/>
            <person name="Hoerlein A."/>
            <person name="Michel G."/>
            <person name="Wedler H."/>
            <person name="Koehrer K."/>
            <person name="Ottenwaelder B."/>
            <person name="Poustka A."/>
            <person name="Wiemann S."/>
            <person name="Schupp I."/>
        </authorList>
    </citation>
    <scope>NUCLEOTIDE SEQUENCE [LARGE SCALE MRNA] (ISOFORM 2)</scope>
    <scope>VARIANT ARG-331</scope>
    <source>
        <tissue>Brain</tissue>
    </source>
</reference>
<reference key="3">
    <citation type="journal article" date="2004" name="Nature">
        <title>The DNA sequence and biology of human chromosome 19.</title>
        <authorList>
            <person name="Grimwood J."/>
            <person name="Gordon L.A."/>
            <person name="Olsen A.S."/>
            <person name="Terry A."/>
            <person name="Schmutz J."/>
            <person name="Lamerdin J.E."/>
            <person name="Hellsten U."/>
            <person name="Goodstein D."/>
            <person name="Couronne O."/>
            <person name="Tran-Gyamfi M."/>
            <person name="Aerts A."/>
            <person name="Altherr M."/>
            <person name="Ashworth L."/>
            <person name="Bajorek E."/>
            <person name="Black S."/>
            <person name="Branscomb E."/>
            <person name="Caenepeel S."/>
            <person name="Carrano A.V."/>
            <person name="Caoile C."/>
            <person name="Chan Y.M."/>
            <person name="Christensen M."/>
            <person name="Cleland C.A."/>
            <person name="Copeland A."/>
            <person name="Dalin E."/>
            <person name="Dehal P."/>
            <person name="Denys M."/>
            <person name="Detter J.C."/>
            <person name="Escobar J."/>
            <person name="Flowers D."/>
            <person name="Fotopulos D."/>
            <person name="Garcia C."/>
            <person name="Georgescu A.M."/>
            <person name="Glavina T."/>
            <person name="Gomez M."/>
            <person name="Gonzales E."/>
            <person name="Groza M."/>
            <person name="Hammon N."/>
            <person name="Hawkins T."/>
            <person name="Haydu L."/>
            <person name="Ho I."/>
            <person name="Huang W."/>
            <person name="Israni S."/>
            <person name="Jett J."/>
            <person name="Kadner K."/>
            <person name="Kimball H."/>
            <person name="Kobayashi A."/>
            <person name="Larionov V."/>
            <person name="Leem S.-H."/>
            <person name="Lopez F."/>
            <person name="Lou Y."/>
            <person name="Lowry S."/>
            <person name="Malfatti S."/>
            <person name="Martinez D."/>
            <person name="McCready P.M."/>
            <person name="Medina C."/>
            <person name="Morgan J."/>
            <person name="Nelson K."/>
            <person name="Nolan M."/>
            <person name="Ovcharenko I."/>
            <person name="Pitluck S."/>
            <person name="Pollard M."/>
            <person name="Popkie A.P."/>
            <person name="Predki P."/>
            <person name="Quan G."/>
            <person name="Ramirez L."/>
            <person name="Rash S."/>
            <person name="Retterer J."/>
            <person name="Rodriguez A."/>
            <person name="Rogers S."/>
            <person name="Salamov A."/>
            <person name="Salazar A."/>
            <person name="She X."/>
            <person name="Smith D."/>
            <person name="Slezak T."/>
            <person name="Solovyev V."/>
            <person name="Thayer N."/>
            <person name="Tice H."/>
            <person name="Tsai M."/>
            <person name="Ustaszewska A."/>
            <person name="Vo N."/>
            <person name="Wagner M."/>
            <person name="Wheeler J."/>
            <person name="Wu K."/>
            <person name="Xie G."/>
            <person name="Yang J."/>
            <person name="Dubchak I."/>
            <person name="Furey T.S."/>
            <person name="DeJong P."/>
            <person name="Dickson M."/>
            <person name="Gordon D."/>
            <person name="Eichler E.E."/>
            <person name="Pennacchio L.A."/>
            <person name="Richardson P."/>
            <person name="Stubbs L."/>
            <person name="Rokhsar D.S."/>
            <person name="Myers R.M."/>
            <person name="Rubin E.M."/>
            <person name="Lucas S.M."/>
        </authorList>
    </citation>
    <scope>NUCLEOTIDE SEQUENCE [LARGE SCALE GENOMIC DNA]</scope>
</reference>
<reference key="4">
    <citation type="journal article" date="2004" name="Genome Res.">
        <title>The status, quality, and expansion of the NIH full-length cDNA project: the Mammalian Gene Collection (MGC).</title>
        <authorList>
            <consortium name="The MGC Project Team"/>
        </authorList>
    </citation>
    <scope>NUCLEOTIDE SEQUENCE [LARGE SCALE MRNA] (ISOFORMS 1 AND 3)</scope>
    <scope>VARIANT ARG-331</scope>
    <source>
        <tissue>Brain</tissue>
        <tissue>Testis</tissue>
    </source>
</reference>
<name>ZN714_HUMAN</name>
<gene>
    <name type="primary">ZNF714</name>
</gene>
<sequence length="554" mass="63883">MNVMLENYKNLVFLAGIAVSKQDPITSLEQEKEPWNMKICEMVDESPAMCSSFTRDLWPEQDIKDSFQQVILRRHGKCEHENLQLRKGSANVVECKVYKKGYELNQCLTTTQSKIFPCDKYIKVFHKIFNSNRHKTRHTGEKPFKCKKCDESFCMLLHLHQHKRIHIRENSYQCEECDKVFKRFSTLTRHKRVHTGEKPFKCEECGKAFKHSSTLTTHKMIHTGEKPYRCEECGKAFYHSSHLTTHKVIHTGEKPFKCEECGKAFNHPSALTTHKFIHVKEKPYKCEECDKAFNRFSYLTKHKIIHSGEKSYKCEQCGKGFNWSSTLTKHKRIHTGEKPYKCEECGKAFNVSSHLTTHKMIHTGEKPYKCEECGKAFNHSSKLTIHKIIHTGEKPYKCEECGKAFNQSSNLTKHKIIHTGEKLYKCEECGKAFNRSSNLTTHKRIHTGEKPYKCEECGKAFNRSSNLTKHNIIHTGEKSYKCEECGKAFNQSSTLTKHRKIQQGMVAHACNPNTLRGLGEQIARSGVQDQPGQHGKTPSLLKIQKFAGCGGRRL</sequence>
<comment type="function">
    <text>May be involved in transcriptional regulation.</text>
</comment>
<comment type="subcellular location">
    <subcellularLocation>
        <location evidence="8">Nucleus</location>
    </subcellularLocation>
</comment>
<comment type="alternative products">
    <event type="alternative splicing"/>
    <isoform>
        <id>Q96N38-1</id>
        <name>1</name>
        <sequence type="displayed"/>
    </isoform>
    <isoform>
        <id>Q96N38-2</id>
        <name>2</name>
        <sequence type="described" ref="VSP_033320 VSP_033321"/>
    </isoform>
    <isoform>
        <id>Q96N38-3</id>
        <name>3</name>
        <sequence type="described" ref="VSP_033319"/>
    </isoform>
</comment>
<comment type="similarity">
    <text evidence="8">Belongs to the krueppel C2H2-type zinc-finger protein family.</text>
</comment>
<comment type="sequence caution" evidence="8">
    <conflict type="erroneous initiation">
        <sequence resource="EMBL-CDS" id="AAH50468"/>
    </conflict>
    <text>Extended N-terminus.</text>
</comment>
<comment type="sequence caution" evidence="8">
    <conflict type="erroneous initiation">
        <sequence resource="EMBL-CDS" id="CAD39077"/>
    </conflict>
    <text>Extended N-terminus.</text>
</comment>
<feature type="chain" id="PRO_0000331749" description="Zinc finger protein 714">
    <location>
        <begin position="1"/>
        <end position="554"/>
    </location>
</feature>
<feature type="domain" description="KRAB" evidence="2">
    <location>
        <begin position="1"/>
        <end position="47"/>
    </location>
</feature>
<feature type="zinc finger region" description="C2H2-type 1; degenerate" evidence="1">
    <location>
        <begin position="116"/>
        <end position="138"/>
    </location>
</feature>
<feature type="zinc finger region" description="C2H2-type 2" evidence="1">
    <location>
        <begin position="144"/>
        <end position="166"/>
    </location>
</feature>
<feature type="zinc finger region" description="C2H2-type 3" evidence="1">
    <location>
        <begin position="172"/>
        <end position="194"/>
    </location>
</feature>
<feature type="zinc finger region" description="C2H2-type 4" evidence="1">
    <location>
        <begin position="200"/>
        <end position="222"/>
    </location>
</feature>
<feature type="zinc finger region" description="C2H2-type 5" evidence="1">
    <location>
        <begin position="228"/>
        <end position="250"/>
    </location>
</feature>
<feature type="zinc finger region" description="C2H2-type 6" evidence="1">
    <location>
        <begin position="256"/>
        <end position="278"/>
    </location>
</feature>
<feature type="zinc finger region" description="C2H2-type 7" evidence="1">
    <location>
        <begin position="284"/>
        <end position="306"/>
    </location>
</feature>
<feature type="zinc finger region" description="C2H2-type 8" evidence="1">
    <location>
        <begin position="312"/>
        <end position="334"/>
    </location>
</feature>
<feature type="zinc finger region" description="C2H2-type 9" evidence="1">
    <location>
        <begin position="340"/>
        <end position="362"/>
    </location>
</feature>
<feature type="zinc finger region" description="C2H2-type 10" evidence="1">
    <location>
        <begin position="368"/>
        <end position="390"/>
    </location>
</feature>
<feature type="zinc finger region" description="C2H2-type 11" evidence="1">
    <location>
        <begin position="396"/>
        <end position="418"/>
    </location>
</feature>
<feature type="zinc finger region" description="C2H2-type 12" evidence="1">
    <location>
        <begin position="424"/>
        <end position="446"/>
    </location>
</feature>
<feature type="zinc finger region" description="C2H2-type 13" evidence="1">
    <location>
        <begin position="452"/>
        <end position="474"/>
    </location>
</feature>
<feature type="zinc finger region" description="C2H2-type 14; degenerate" evidence="1">
    <location>
        <begin position="480"/>
        <end position="502"/>
    </location>
</feature>
<feature type="splice variant" id="VSP_033319" description="In isoform 3." evidence="6">
    <location>
        <begin position="1"/>
        <end position="154"/>
    </location>
</feature>
<feature type="splice variant" id="VSP_033320" description="In isoform 2." evidence="7">
    <original>RGLGEQIA</original>
    <variation>GGQGRWIT</variation>
    <location>
        <begin position="516"/>
        <end position="523"/>
    </location>
</feature>
<feature type="splice variant" id="VSP_033321" description="In isoform 2." evidence="7">
    <location>
        <begin position="524"/>
        <end position="554"/>
    </location>
</feature>
<feature type="sequence variant" id="VAR_042936" description="In dbSNP:rs2884554." evidence="3 4 5">
    <original>K</original>
    <variation>R</variation>
    <location>
        <position position="331"/>
    </location>
</feature>
<feature type="sequence variant" id="VAR_057448" description="In dbSNP:rs10427116.">
    <original>I</original>
    <variation>V</variation>
    <location>
        <position position="472"/>
    </location>
</feature>
<feature type="sequence variant" id="VAR_042937" description="In dbSNP:rs10427116.">
    <original>I</original>
    <variation>V</variation>
    <location>
        <position position="473"/>
    </location>
</feature>
<feature type="sequence conflict" description="In Ref. 1; BAB71072, 2; CAD39077 and 4; AAH50468." evidence="8" ref="1 2 4">
    <original>Y</original>
    <variation>YN</variation>
    <location>
        <position position="102"/>
    </location>
</feature>
<feature type="sequence conflict" description="In Ref. 2; CAD39077." evidence="8" ref="2">
    <original>N</original>
    <variation>S</variation>
    <location>
        <position position="513"/>
    </location>
</feature>
<proteinExistence type="evidence at protein level"/>
<evidence type="ECO:0000255" key="1">
    <source>
        <dbReference type="PROSITE-ProRule" id="PRU00042"/>
    </source>
</evidence>
<evidence type="ECO:0000255" key="2">
    <source>
        <dbReference type="PROSITE-ProRule" id="PRU00119"/>
    </source>
</evidence>
<evidence type="ECO:0000269" key="3">
    <source>
    </source>
</evidence>
<evidence type="ECO:0000269" key="4">
    <source>
    </source>
</evidence>
<evidence type="ECO:0000269" key="5">
    <source>
    </source>
</evidence>
<evidence type="ECO:0000303" key="6">
    <source>
    </source>
</evidence>
<evidence type="ECO:0000303" key="7">
    <source>
    </source>
</evidence>
<evidence type="ECO:0000305" key="8"/>
<organism>
    <name type="scientific">Homo sapiens</name>
    <name type="common">Human</name>
    <dbReference type="NCBI Taxonomy" id="9606"/>
    <lineage>
        <taxon>Eukaryota</taxon>
        <taxon>Metazoa</taxon>
        <taxon>Chordata</taxon>
        <taxon>Craniata</taxon>
        <taxon>Vertebrata</taxon>
        <taxon>Euteleostomi</taxon>
        <taxon>Mammalia</taxon>
        <taxon>Eutheria</taxon>
        <taxon>Euarchontoglires</taxon>
        <taxon>Primates</taxon>
        <taxon>Haplorrhini</taxon>
        <taxon>Catarrhini</taxon>
        <taxon>Hominidae</taxon>
        <taxon>Homo</taxon>
    </lineage>
</organism>